<sequence>MTDEQTPAEEMPFEADDAAQEIEALKLEVAQLKEQALRYAAEAENTKRRAEREMNDARAYAIQKFARDLLGAADNLGRATAHSPKDSTDPAVKNFIIGVEMTEKELQSAFERNGLKKIDPAKGDKFDPHLHQAVTEQPSTEVAAGGVLMVMQAGYELMGRLVRPAMVAVAAKGSTGPASPDAPAASANPYAGAAAEGDSTGGAFDAKA</sequence>
<accession>B8GXP4</accession>
<accession>P48195</accession>
<evidence type="ECO:0000250" key="1"/>
<evidence type="ECO:0000256" key="2">
    <source>
        <dbReference type="SAM" id="MobiDB-lite"/>
    </source>
</evidence>
<evidence type="ECO:0000305" key="3"/>
<organism>
    <name type="scientific">Caulobacter vibrioides (strain NA1000 / CB15N)</name>
    <name type="common">Caulobacter crescentus</name>
    <dbReference type="NCBI Taxonomy" id="565050"/>
    <lineage>
        <taxon>Bacteria</taxon>
        <taxon>Pseudomonadati</taxon>
        <taxon>Pseudomonadota</taxon>
        <taxon>Alphaproteobacteria</taxon>
        <taxon>Caulobacterales</taxon>
        <taxon>Caulobacteraceae</taxon>
        <taxon>Caulobacter</taxon>
    </lineage>
</organism>
<proteinExistence type="inferred from homology"/>
<name>GRPE_CAUVN</name>
<reference key="1">
    <citation type="journal article" date="1996" name="J. Bacteriol.">
        <title>Identification of a Caulobacter crescentus operon encoding hrcA, involved in negatively regulating heat-inducible transcription, and the chaperone gene grpE.</title>
        <authorList>
            <person name="Roberts R.C."/>
            <person name="Toochinda C."/>
            <person name="Avedissian M."/>
            <person name="Baldini R.L."/>
            <person name="Gomes S.L."/>
            <person name="Shapiro L."/>
        </authorList>
    </citation>
    <scope>NUCLEOTIDE SEQUENCE [GENOMIC DNA]</scope>
</reference>
<reference key="2">
    <citation type="journal article" date="2010" name="J. Bacteriol.">
        <title>The genetic basis of laboratory adaptation in Caulobacter crescentus.</title>
        <authorList>
            <person name="Marks M.E."/>
            <person name="Castro-Rojas C.M."/>
            <person name="Teiling C."/>
            <person name="Du L."/>
            <person name="Kapatral V."/>
            <person name="Walunas T.L."/>
            <person name="Crosson S."/>
        </authorList>
    </citation>
    <scope>NUCLEOTIDE SEQUENCE [LARGE SCALE GENOMIC DNA]</scope>
    <source>
        <strain>NA1000 / CB15N</strain>
    </source>
</reference>
<gene>
    <name type="primary">grpE</name>
    <name type="ordered locus">CCNA_00153</name>
</gene>
<dbReference type="EMBL" id="U33324">
    <property type="protein sequence ID" value="AAB01516.1"/>
    <property type="status" value="ALT_INIT"/>
    <property type="molecule type" value="Genomic_DNA"/>
</dbReference>
<dbReference type="EMBL" id="CP001340">
    <property type="protein sequence ID" value="ACL93620.1"/>
    <property type="molecule type" value="Genomic_DNA"/>
</dbReference>
<dbReference type="RefSeq" id="WP_012639893.1">
    <property type="nucleotide sequence ID" value="NC_011916.1"/>
</dbReference>
<dbReference type="RefSeq" id="YP_002515528.1">
    <property type="nucleotide sequence ID" value="NC_011916.1"/>
</dbReference>
<dbReference type="SMR" id="B8GXP4"/>
<dbReference type="GeneID" id="7332407"/>
<dbReference type="KEGG" id="ccs:CCNA_00153"/>
<dbReference type="PATRIC" id="fig|565050.3.peg.152"/>
<dbReference type="HOGENOM" id="CLU_057217_6_2_5"/>
<dbReference type="OrthoDB" id="9789811at2"/>
<dbReference type="PhylomeDB" id="B8GXP4"/>
<dbReference type="Proteomes" id="UP000001364">
    <property type="component" value="Chromosome"/>
</dbReference>
<dbReference type="GO" id="GO:0005737">
    <property type="term" value="C:cytoplasm"/>
    <property type="evidence" value="ECO:0007669"/>
    <property type="project" value="UniProtKB-SubCell"/>
</dbReference>
<dbReference type="GO" id="GO:0000774">
    <property type="term" value="F:adenyl-nucleotide exchange factor activity"/>
    <property type="evidence" value="ECO:0007669"/>
    <property type="project" value="InterPro"/>
</dbReference>
<dbReference type="GO" id="GO:0042803">
    <property type="term" value="F:protein homodimerization activity"/>
    <property type="evidence" value="ECO:0007669"/>
    <property type="project" value="InterPro"/>
</dbReference>
<dbReference type="GO" id="GO:0051087">
    <property type="term" value="F:protein-folding chaperone binding"/>
    <property type="evidence" value="ECO:0007669"/>
    <property type="project" value="InterPro"/>
</dbReference>
<dbReference type="GO" id="GO:0051082">
    <property type="term" value="F:unfolded protein binding"/>
    <property type="evidence" value="ECO:0007669"/>
    <property type="project" value="TreeGrafter"/>
</dbReference>
<dbReference type="GO" id="GO:0006457">
    <property type="term" value="P:protein folding"/>
    <property type="evidence" value="ECO:0007669"/>
    <property type="project" value="InterPro"/>
</dbReference>
<dbReference type="CDD" id="cd00446">
    <property type="entry name" value="GrpE"/>
    <property type="match status" value="1"/>
</dbReference>
<dbReference type="FunFam" id="2.30.22.10:FF:000001">
    <property type="entry name" value="Protein GrpE"/>
    <property type="match status" value="1"/>
</dbReference>
<dbReference type="Gene3D" id="3.90.20.20">
    <property type="match status" value="1"/>
</dbReference>
<dbReference type="Gene3D" id="2.30.22.10">
    <property type="entry name" value="Head domain of nucleotide exchange factor GrpE"/>
    <property type="match status" value="1"/>
</dbReference>
<dbReference type="HAMAP" id="MF_01151">
    <property type="entry name" value="GrpE"/>
    <property type="match status" value="1"/>
</dbReference>
<dbReference type="InterPro" id="IPR000740">
    <property type="entry name" value="GrpE"/>
</dbReference>
<dbReference type="InterPro" id="IPR013805">
    <property type="entry name" value="GrpE_coiled_coil"/>
</dbReference>
<dbReference type="InterPro" id="IPR009012">
    <property type="entry name" value="GrpE_head"/>
</dbReference>
<dbReference type="NCBIfam" id="NF010738">
    <property type="entry name" value="PRK14140.1"/>
    <property type="match status" value="1"/>
</dbReference>
<dbReference type="NCBIfam" id="NF010748">
    <property type="entry name" value="PRK14150.1"/>
    <property type="match status" value="1"/>
</dbReference>
<dbReference type="NCBIfam" id="NF010752">
    <property type="entry name" value="PRK14155.1"/>
    <property type="match status" value="1"/>
</dbReference>
<dbReference type="PANTHER" id="PTHR21237">
    <property type="entry name" value="GRPE PROTEIN"/>
    <property type="match status" value="1"/>
</dbReference>
<dbReference type="PANTHER" id="PTHR21237:SF23">
    <property type="entry name" value="GRPE PROTEIN HOMOLOG, MITOCHONDRIAL"/>
    <property type="match status" value="1"/>
</dbReference>
<dbReference type="Pfam" id="PF01025">
    <property type="entry name" value="GrpE"/>
    <property type="match status" value="1"/>
</dbReference>
<dbReference type="PRINTS" id="PR00773">
    <property type="entry name" value="GRPEPROTEIN"/>
</dbReference>
<dbReference type="SUPFAM" id="SSF58014">
    <property type="entry name" value="Coiled-coil domain of nucleotide exchange factor GrpE"/>
    <property type="match status" value="1"/>
</dbReference>
<dbReference type="SUPFAM" id="SSF51064">
    <property type="entry name" value="Head domain of nucleotide exchange factor GrpE"/>
    <property type="match status" value="1"/>
</dbReference>
<dbReference type="PROSITE" id="PS01071">
    <property type="entry name" value="GRPE"/>
    <property type="match status" value="1"/>
</dbReference>
<feature type="chain" id="PRO_0000378292" description="Protein GrpE">
    <location>
        <begin position="1"/>
        <end position="208"/>
    </location>
</feature>
<feature type="region of interest" description="Disordered" evidence="2">
    <location>
        <begin position="172"/>
        <end position="208"/>
    </location>
</feature>
<feature type="compositionally biased region" description="Low complexity" evidence="2">
    <location>
        <begin position="173"/>
        <end position="197"/>
    </location>
</feature>
<comment type="function">
    <text evidence="1">Participates actively in the response to hyperosmotic and heat shock by preventing the aggregation of stress-denatured proteins, in association with DnaK and GrpE. It is the nucleotide exchange factor for DnaK and may function as a thermosensor. Unfolded proteins bind initially to DnaJ; upon interaction with the DnaJ-bound protein, DnaK hydrolyzes its bound ATP, resulting in the formation of a stable complex. GrpE releases ADP from DnaK; ATP binding to DnaK triggers the release of the substrate protein, thus completing the reaction cycle. Several rounds of ATP-dependent interactions between DnaJ, DnaK and GrpE are required for fully efficient folding (By similarity).</text>
</comment>
<comment type="subunit">
    <text evidence="1">Homodimer.</text>
</comment>
<comment type="subcellular location">
    <subcellularLocation>
        <location evidence="1">Cytoplasm</location>
    </subcellularLocation>
</comment>
<comment type="similarity">
    <text evidence="3">Belongs to the GrpE family.</text>
</comment>
<comment type="caution">
    <text evidence="3">It is uncertain whether Met-1 or Met-11 is the initiator.</text>
</comment>
<comment type="sequence caution" evidence="3">
    <conflict type="erroneous initiation">
        <sequence resource="EMBL-CDS" id="AAB01516"/>
    </conflict>
</comment>
<keyword id="KW-0143">Chaperone</keyword>
<keyword id="KW-0963">Cytoplasm</keyword>
<keyword id="KW-1185">Reference proteome</keyword>
<keyword id="KW-0346">Stress response</keyword>
<protein>
    <recommendedName>
        <fullName>Protein GrpE</fullName>
    </recommendedName>
    <alternativeName>
        <fullName>HSP-70 cofactor</fullName>
    </alternativeName>
</protein>